<dbReference type="EMBL" id="AE014296">
    <property type="protein sequence ID" value="AAF50112.2"/>
    <property type="molecule type" value="Genomic_DNA"/>
</dbReference>
<dbReference type="EMBL" id="BT023680">
    <property type="protein sequence ID" value="AAY85080.1"/>
    <property type="molecule type" value="mRNA"/>
</dbReference>
<dbReference type="RefSeq" id="NP_648427.1">
    <property type="nucleotide sequence ID" value="NM_140170.2"/>
</dbReference>
<dbReference type="SMR" id="Q9VTE0"/>
<dbReference type="BioGRID" id="64610">
    <property type="interactions" value="33"/>
</dbReference>
<dbReference type="ComplexPortal" id="CPX-2753">
    <property type="entry name" value="BLOC-1 complex"/>
</dbReference>
<dbReference type="ComplexPortal" id="CPX-2760">
    <property type="entry name" value="BORC complex"/>
</dbReference>
<dbReference type="FunCoup" id="Q9VTE0">
    <property type="interactions" value="32"/>
</dbReference>
<dbReference type="IntAct" id="Q9VTE0">
    <property type="interactions" value="16"/>
</dbReference>
<dbReference type="STRING" id="7227.FBpp0075932"/>
<dbReference type="PaxDb" id="7227-FBpp0075932"/>
<dbReference type="DNASU" id="39234"/>
<dbReference type="EnsemblMetazoa" id="FBtr0076202">
    <property type="protein sequence ID" value="FBpp0075932"/>
    <property type="gene ID" value="FBgn0036118"/>
</dbReference>
<dbReference type="GeneID" id="39234"/>
<dbReference type="KEGG" id="dme:Dmel_CG14145"/>
<dbReference type="UCSC" id="CG14145-RA">
    <property type="organism name" value="d. melanogaster"/>
</dbReference>
<dbReference type="AGR" id="FB:FBgn0036118"/>
<dbReference type="CTD" id="39234"/>
<dbReference type="FlyBase" id="FBgn0036118">
    <property type="gene designation" value="Blos2"/>
</dbReference>
<dbReference type="VEuPathDB" id="VectorBase:FBgn0036118"/>
<dbReference type="eggNOG" id="KOG4559">
    <property type="taxonomic scope" value="Eukaryota"/>
</dbReference>
<dbReference type="GeneTree" id="ENSGT00390000005889"/>
<dbReference type="HOGENOM" id="CLU_110820_1_0_1"/>
<dbReference type="InParanoid" id="Q9VTE0"/>
<dbReference type="OMA" id="PMMQQID"/>
<dbReference type="OrthoDB" id="244061at2759"/>
<dbReference type="PhylomeDB" id="Q9VTE0"/>
<dbReference type="SignaLink" id="Q9VTE0"/>
<dbReference type="BioGRID-ORCS" id="39234">
    <property type="hits" value="0 hits in 1 CRISPR screen"/>
</dbReference>
<dbReference type="GenomeRNAi" id="39234"/>
<dbReference type="PRO" id="PR:Q9VTE0"/>
<dbReference type="Proteomes" id="UP000000803">
    <property type="component" value="Chromosome 3L"/>
</dbReference>
<dbReference type="Bgee" id="FBgn0036118">
    <property type="expression patterns" value="Expressed in saliva-secreting gland and 63 other cell types or tissues"/>
</dbReference>
<dbReference type="ExpressionAtlas" id="Q9VTE0">
    <property type="expression patterns" value="baseline and differential"/>
</dbReference>
<dbReference type="GO" id="GO:0031083">
    <property type="term" value="C:BLOC-1 complex"/>
    <property type="evidence" value="ECO:0000250"/>
    <property type="project" value="FlyBase"/>
</dbReference>
<dbReference type="GO" id="GO:0099078">
    <property type="term" value="C:BORC complex"/>
    <property type="evidence" value="ECO:0000318"/>
    <property type="project" value="GO_Central"/>
</dbReference>
<dbReference type="GO" id="GO:0000930">
    <property type="term" value="C:gamma-tubulin complex"/>
    <property type="evidence" value="ECO:0000318"/>
    <property type="project" value="GO_Central"/>
</dbReference>
<dbReference type="GO" id="GO:0043015">
    <property type="term" value="F:gamma-tubulin binding"/>
    <property type="evidence" value="ECO:0000318"/>
    <property type="project" value="GO_Central"/>
</dbReference>
<dbReference type="GO" id="GO:0042803">
    <property type="term" value="F:protein homodimerization activity"/>
    <property type="evidence" value="ECO:0000314"/>
    <property type="project" value="UniProtKB"/>
</dbReference>
<dbReference type="GO" id="GO:0061909">
    <property type="term" value="P:autophagosome-lysosome fusion"/>
    <property type="evidence" value="ECO:0000315"/>
    <property type="project" value="FlyBase"/>
</dbReference>
<dbReference type="GO" id="GO:0016197">
    <property type="term" value="P:endosomal transport"/>
    <property type="evidence" value="ECO:0000318"/>
    <property type="project" value="GO_Central"/>
</dbReference>
<dbReference type="GO" id="GO:0032418">
    <property type="term" value="P:lysosome localization"/>
    <property type="evidence" value="ECO:0000318"/>
    <property type="project" value="GO_Central"/>
</dbReference>
<dbReference type="InterPro" id="IPR019269">
    <property type="entry name" value="BLOC1_su2"/>
</dbReference>
<dbReference type="PANTHER" id="PTHR46479">
    <property type="entry name" value="BIOGENESIS OF LYSOSOME-RELATED ORGANELLES COMPLEX 1 SUBUNIT 2"/>
    <property type="match status" value="1"/>
</dbReference>
<dbReference type="PANTHER" id="PTHR46479:SF1">
    <property type="entry name" value="BIOGENESIS OF LYSOSOME-RELATED ORGANELLES COMPLEX 1 SUBUNIT 2"/>
    <property type="match status" value="1"/>
</dbReference>
<dbReference type="Pfam" id="PF10046">
    <property type="entry name" value="BLOC1_2"/>
    <property type="match status" value="1"/>
</dbReference>
<organism>
    <name type="scientific">Drosophila melanogaster</name>
    <name type="common">Fruit fly</name>
    <dbReference type="NCBI Taxonomy" id="7227"/>
    <lineage>
        <taxon>Eukaryota</taxon>
        <taxon>Metazoa</taxon>
        <taxon>Ecdysozoa</taxon>
        <taxon>Arthropoda</taxon>
        <taxon>Hexapoda</taxon>
        <taxon>Insecta</taxon>
        <taxon>Pterygota</taxon>
        <taxon>Neoptera</taxon>
        <taxon>Endopterygota</taxon>
        <taxon>Diptera</taxon>
        <taxon>Brachycera</taxon>
        <taxon>Muscomorpha</taxon>
        <taxon>Ephydroidea</taxon>
        <taxon>Drosophilidae</taxon>
        <taxon>Drosophila</taxon>
        <taxon>Sophophora</taxon>
    </lineage>
</organism>
<protein>
    <recommendedName>
        <fullName>Biogenesis of lysosome-related organelles complex 1 subunit 2</fullName>
        <shortName>BLOC-1 subunit 2</shortName>
    </recommendedName>
</protein>
<gene>
    <name evidence="5" type="primary">Blos2</name>
    <name evidence="5" type="ORF">CG14145</name>
</gene>
<accession>Q9VTE0</accession>
<proteinExistence type="evidence at protein level"/>
<evidence type="ECO:0000255" key="1"/>
<evidence type="ECO:0000256" key="2">
    <source>
        <dbReference type="SAM" id="MobiDB-lite"/>
    </source>
</evidence>
<evidence type="ECO:0000269" key="3">
    <source>
    </source>
</evidence>
<evidence type="ECO:0000305" key="4"/>
<evidence type="ECO:0000312" key="5">
    <source>
        <dbReference type="FlyBase" id="FBgn0036118"/>
    </source>
</evidence>
<name>BL1S2_DROME</name>
<reference key="1">
    <citation type="journal article" date="2000" name="Science">
        <title>The genome sequence of Drosophila melanogaster.</title>
        <authorList>
            <person name="Adams M.D."/>
            <person name="Celniker S.E."/>
            <person name="Holt R.A."/>
            <person name="Evans C.A."/>
            <person name="Gocayne J.D."/>
            <person name="Amanatides P.G."/>
            <person name="Scherer S.E."/>
            <person name="Li P.W."/>
            <person name="Hoskins R.A."/>
            <person name="Galle R.F."/>
            <person name="George R.A."/>
            <person name="Lewis S.E."/>
            <person name="Richards S."/>
            <person name="Ashburner M."/>
            <person name="Henderson S.N."/>
            <person name="Sutton G.G."/>
            <person name="Wortman J.R."/>
            <person name="Yandell M.D."/>
            <person name="Zhang Q."/>
            <person name="Chen L.X."/>
            <person name="Brandon R.C."/>
            <person name="Rogers Y.-H.C."/>
            <person name="Blazej R.G."/>
            <person name="Champe M."/>
            <person name="Pfeiffer B.D."/>
            <person name="Wan K.H."/>
            <person name="Doyle C."/>
            <person name="Baxter E.G."/>
            <person name="Helt G."/>
            <person name="Nelson C.R."/>
            <person name="Miklos G.L.G."/>
            <person name="Abril J.F."/>
            <person name="Agbayani A."/>
            <person name="An H.-J."/>
            <person name="Andrews-Pfannkoch C."/>
            <person name="Baldwin D."/>
            <person name="Ballew R.M."/>
            <person name="Basu A."/>
            <person name="Baxendale J."/>
            <person name="Bayraktaroglu L."/>
            <person name="Beasley E.M."/>
            <person name="Beeson K.Y."/>
            <person name="Benos P.V."/>
            <person name="Berman B.P."/>
            <person name="Bhandari D."/>
            <person name="Bolshakov S."/>
            <person name="Borkova D."/>
            <person name="Botchan M.R."/>
            <person name="Bouck J."/>
            <person name="Brokstein P."/>
            <person name="Brottier P."/>
            <person name="Burtis K.C."/>
            <person name="Busam D.A."/>
            <person name="Butler H."/>
            <person name="Cadieu E."/>
            <person name="Center A."/>
            <person name="Chandra I."/>
            <person name="Cherry J.M."/>
            <person name="Cawley S."/>
            <person name="Dahlke C."/>
            <person name="Davenport L.B."/>
            <person name="Davies P."/>
            <person name="de Pablos B."/>
            <person name="Delcher A."/>
            <person name="Deng Z."/>
            <person name="Mays A.D."/>
            <person name="Dew I."/>
            <person name="Dietz S.M."/>
            <person name="Dodson K."/>
            <person name="Doup L.E."/>
            <person name="Downes M."/>
            <person name="Dugan-Rocha S."/>
            <person name="Dunkov B.C."/>
            <person name="Dunn P."/>
            <person name="Durbin K.J."/>
            <person name="Evangelista C.C."/>
            <person name="Ferraz C."/>
            <person name="Ferriera S."/>
            <person name="Fleischmann W."/>
            <person name="Fosler C."/>
            <person name="Gabrielian A.E."/>
            <person name="Garg N.S."/>
            <person name="Gelbart W.M."/>
            <person name="Glasser K."/>
            <person name="Glodek A."/>
            <person name="Gong F."/>
            <person name="Gorrell J.H."/>
            <person name="Gu Z."/>
            <person name="Guan P."/>
            <person name="Harris M."/>
            <person name="Harris N.L."/>
            <person name="Harvey D.A."/>
            <person name="Heiman T.J."/>
            <person name="Hernandez J.R."/>
            <person name="Houck J."/>
            <person name="Hostin D."/>
            <person name="Houston K.A."/>
            <person name="Howland T.J."/>
            <person name="Wei M.-H."/>
            <person name="Ibegwam C."/>
            <person name="Jalali M."/>
            <person name="Kalush F."/>
            <person name="Karpen G.H."/>
            <person name="Ke Z."/>
            <person name="Kennison J.A."/>
            <person name="Ketchum K.A."/>
            <person name="Kimmel B.E."/>
            <person name="Kodira C.D."/>
            <person name="Kraft C.L."/>
            <person name="Kravitz S."/>
            <person name="Kulp D."/>
            <person name="Lai Z."/>
            <person name="Lasko P."/>
            <person name="Lei Y."/>
            <person name="Levitsky A.A."/>
            <person name="Li J.H."/>
            <person name="Li Z."/>
            <person name="Liang Y."/>
            <person name="Lin X."/>
            <person name="Liu X."/>
            <person name="Mattei B."/>
            <person name="McIntosh T.C."/>
            <person name="McLeod M.P."/>
            <person name="McPherson D."/>
            <person name="Merkulov G."/>
            <person name="Milshina N.V."/>
            <person name="Mobarry C."/>
            <person name="Morris J."/>
            <person name="Moshrefi A."/>
            <person name="Mount S.M."/>
            <person name="Moy M."/>
            <person name="Murphy B."/>
            <person name="Murphy L."/>
            <person name="Muzny D.M."/>
            <person name="Nelson D.L."/>
            <person name="Nelson D.R."/>
            <person name="Nelson K.A."/>
            <person name="Nixon K."/>
            <person name="Nusskern D.R."/>
            <person name="Pacleb J.M."/>
            <person name="Palazzolo M."/>
            <person name="Pittman G.S."/>
            <person name="Pan S."/>
            <person name="Pollard J."/>
            <person name="Puri V."/>
            <person name="Reese M.G."/>
            <person name="Reinert K."/>
            <person name="Remington K."/>
            <person name="Saunders R.D.C."/>
            <person name="Scheeler F."/>
            <person name="Shen H."/>
            <person name="Shue B.C."/>
            <person name="Siden-Kiamos I."/>
            <person name="Simpson M."/>
            <person name="Skupski M.P."/>
            <person name="Smith T.J."/>
            <person name="Spier E."/>
            <person name="Spradling A.C."/>
            <person name="Stapleton M."/>
            <person name="Strong R."/>
            <person name="Sun E."/>
            <person name="Svirskas R."/>
            <person name="Tector C."/>
            <person name="Turner R."/>
            <person name="Venter E."/>
            <person name="Wang A.H."/>
            <person name="Wang X."/>
            <person name="Wang Z.-Y."/>
            <person name="Wassarman D.A."/>
            <person name="Weinstock G.M."/>
            <person name="Weissenbach J."/>
            <person name="Williams S.M."/>
            <person name="Woodage T."/>
            <person name="Worley K.C."/>
            <person name="Wu D."/>
            <person name="Yang S."/>
            <person name="Yao Q.A."/>
            <person name="Ye J."/>
            <person name="Yeh R.-F."/>
            <person name="Zaveri J.S."/>
            <person name="Zhan M."/>
            <person name="Zhang G."/>
            <person name="Zhao Q."/>
            <person name="Zheng L."/>
            <person name="Zheng X.H."/>
            <person name="Zhong F.N."/>
            <person name="Zhong W."/>
            <person name="Zhou X."/>
            <person name="Zhu S.C."/>
            <person name="Zhu X."/>
            <person name="Smith H.O."/>
            <person name="Gibbs R.A."/>
            <person name="Myers E.W."/>
            <person name="Rubin G.M."/>
            <person name="Venter J.C."/>
        </authorList>
    </citation>
    <scope>NUCLEOTIDE SEQUENCE [LARGE SCALE GENOMIC DNA]</scope>
    <source>
        <strain>Berkeley</strain>
    </source>
</reference>
<reference key="2">
    <citation type="journal article" date="2002" name="Genome Biol.">
        <title>Annotation of the Drosophila melanogaster euchromatic genome: a systematic review.</title>
        <authorList>
            <person name="Misra S."/>
            <person name="Crosby M.A."/>
            <person name="Mungall C.J."/>
            <person name="Matthews B.B."/>
            <person name="Campbell K.S."/>
            <person name="Hradecky P."/>
            <person name="Huang Y."/>
            <person name="Kaminker J.S."/>
            <person name="Millburn G.H."/>
            <person name="Prochnik S.E."/>
            <person name="Smith C.D."/>
            <person name="Tupy J.L."/>
            <person name="Whitfield E.J."/>
            <person name="Bayraktaroglu L."/>
            <person name="Berman B.P."/>
            <person name="Bettencourt B.R."/>
            <person name="Celniker S.E."/>
            <person name="de Grey A.D.N.J."/>
            <person name="Drysdale R.A."/>
            <person name="Harris N.L."/>
            <person name="Richter J."/>
            <person name="Russo S."/>
            <person name="Schroeder A.J."/>
            <person name="Shu S.Q."/>
            <person name="Stapleton M."/>
            <person name="Yamada C."/>
            <person name="Ashburner M."/>
            <person name="Gelbart W.M."/>
            <person name="Rubin G.M."/>
            <person name="Lewis S.E."/>
        </authorList>
    </citation>
    <scope>GENOME REANNOTATION</scope>
    <source>
        <strain>Berkeley</strain>
    </source>
</reference>
<reference key="3">
    <citation type="journal article" date="2002" name="Genome Biol.">
        <title>A Drosophila full-length cDNA resource.</title>
        <authorList>
            <person name="Stapleton M."/>
            <person name="Carlson J.W."/>
            <person name="Brokstein P."/>
            <person name="Yu C."/>
            <person name="Champe M."/>
            <person name="George R.A."/>
            <person name="Guarin H."/>
            <person name="Kronmiller B."/>
            <person name="Pacleb J.M."/>
            <person name="Park S."/>
            <person name="Wan K.H."/>
            <person name="Rubin G.M."/>
            <person name="Celniker S.E."/>
        </authorList>
    </citation>
    <scope>NUCLEOTIDE SEQUENCE [LARGE SCALE MRNA]</scope>
    <source>
        <strain>Berkeley</strain>
    </source>
</reference>
<reference key="4">
    <citation type="journal article" date="2010" name="Hum. Mol. Genet.">
        <title>Genetic modifiers of abnormal organelle biogenesis in a Drosophila model of BLOC-1 deficiency.</title>
        <authorList>
            <person name="Cheli V.T."/>
            <person name="Daniels R.W."/>
            <person name="Godoy R."/>
            <person name="Hoyle D.J."/>
            <person name="Kandachar V."/>
            <person name="Starcevic M."/>
            <person name="Martinez-Agosto J.A."/>
            <person name="Poole S."/>
            <person name="DiAntonio A."/>
            <person name="Lloyd V.K."/>
            <person name="Chang H.C."/>
            <person name="Krantz D.E."/>
            <person name="Dell'Angelica E.C."/>
        </authorList>
    </citation>
    <scope>IDENTIFICATION IN THE BLOC-1 COMPLEX</scope>
    <scope>FUNCTION</scope>
    <scope>HOMODIMERIZATION</scope>
    <scope>INTERACTION WITH SNAPIN</scope>
</reference>
<comment type="function">
    <text evidence="3">Component of the biogenesis of lysosome-related organelles complex-1 (BLOC-1) involved in pigment granule biogenesis.</text>
</comment>
<comment type="subunit">
    <text evidence="3">Homodimer. Component of the biogenesis of lysosome-related organelles complex-1 (BLOC-1) composed of Blos1, Blos2, Blos3, Blos4, Dysb, Muted, Pldn and Snapin. Interacts with Snapin.</text>
</comment>
<comment type="similarity">
    <text evidence="4">Belongs to the BLOC1S2 family.</text>
</comment>
<sequence length="159" mass="17564">MDKPTTSAAAAAAQDSNLLPDSPQHGPTLSSASSFEALTRHDPNLSRLATKMFNKTEEYITHELNAPLEDYKLLEEMNKATIAKYKDMRQIAENLNTSTSELSLKFQQLAPMMQQIDEISDTVDKLEAAAYKLDAYSIALENRVKCVLQRKSGGGQVAQ</sequence>
<keyword id="KW-0175">Coiled coil</keyword>
<keyword id="KW-1185">Reference proteome</keyword>
<feature type="chain" id="PRO_0000420193" description="Biogenesis of lysosome-related organelles complex 1 subunit 2">
    <location>
        <begin position="1"/>
        <end position="159"/>
    </location>
</feature>
<feature type="region of interest" description="Disordered" evidence="2">
    <location>
        <begin position="1"/>
        <end position="37"/>
    </location>
</feature>
<feature type="coiled-coil region" evidence="1">
    <location>
        <begin position="69"/>
        <end position="134"/>
    </location>
</feature>
<feature type="compositionally biased region" description="Polar residues" evidence="2">
    <location>
        <begin position="14"/>
        <end position="36"/>
    </location>
</feature>